<accession>Q92GY7</accession>
<comment type="function">
    <text evidence="1">Catalyzes the reversible transfer of the terminal phosphate group between ATP and AMP. Plays an important role in cellular energy homeostasis and in adenine nucleotide metabolism.</text>
</comment>
<comment type="catalytic activity">
    <reaction evidence="1">
        <text>AMP + ATP = 2 ADP</text>
        <dbReference type="Rhea" id="RHEA:12973"/>
        <dbReference type="ChEBI" id="CHEBI:30616"/>
        <dbReference type="ChEBI" id="CHEBI:456215"/>
        <dbReference type="ChEBI" id="CHEBI:456216"/>
        <dbReference type="EC" id="2.7.4.3"/>
    </reaction>
</comment>
<comment type="pathway">
    <text evidence="1">Purine metabolism; AMP biosynthesis via salvage pathway; AMP from ADP: step 1/1.</text>
</comment>
<comment type="subunit">
    <text evidence="1">Monomer.</text>
</comment>
<comment type="subcellular location">
    <subcellularLocation>
        <location evidence="1">Cytoplasm</location>
    </subcellularLocation>
</comment>
<comment type="domain">
    <text evidence="1">Consists of three domains, a large central CORE domain and two small peripheral domains, NMPbind and LID, which undergo movements during catalysis. The LID domain closes over the site of phosphoryl transfer upon ATP binding. Assembling and dissambling the active center during each catalytic cycle provides an effective means to prevent ATP hydrolysis. Some bacteria have evolved a zinc-coordinating structure that stabilizes the LID domain.</text>
</comment>
<comment type="similarity">
    <text evidence="1">Belongs to the adenylate kinase family.</text>
</comment>
<dbReference type="EC" id="2.7.4.3" evidence="1"/>
<dbReference type="EMBL" id="AE006914">
    <property type="protein sequence ID" value="AAL03523.1"/>
    <property type="molecule type" value="Genomic_DNA"/>
</dbReference>
<dbReference type="PIR" id="A97823">
    <property type="entry name" value="A97823"/>
</dbReference>
<dbReference type="RefSeq" id="WP_010977577.1">
    <property type="nucleotide sequence ID" value="NC_003103.1"/>
</dbReference>
<dbReference type="SMR" id="Q92GY7"/>
<dbReference type="GeneID" id="928128"/>
<dbReference type="KEGG" id="rco:RC0985"/>
<dbReference type="PATRIC" id="fig|272944.4.peg.1125"/>
<dbReference type="HOGENOM" id="CLU_032354_1_2_5"/>
<dbReference type="UniPathway" id="UPA00588">
    <property type="reaction ID" value="UER00649"/>
</dbReference>
<dbReference type="Proteomes" id="UP000000816">
    <property type="component" value="Chromosome"/>
</dbReference>
<dbReference type="GO" id="GO:0005737">
    <property type="term" value="C:cytoplasm"/>
    <property type="evidence" value="ECO:0007669"/>
    <property type="project" value="UniProtKB-SubCell"/>
</dbReference>
<dbReference type="GO" id="GO:0004017">
    <property type="term" value="F:adenylate kinase activity"/>
    <property type="evidence" value="ECO:0007669"/>
    <property type="project" value="UniProtKB-UniRule"/>
</dbReference>
<dbReference type="GO" id="GO:0005524">
    <property type="term" value="F:ATP binding"/>
    <property type="evidence" value="ECO:0007669"/>
    <property type="project" value="UniProtKB-UniRule"/>
</dbReference>
<dbReference type="GO" id="GO:0008270">
    <property type="term" value="F:zinc ion binding"/>
    <property type="evidence" value="ECO:0007669"/>
    <property type="project" value="UniProtKB-UniRule"/>
</dbReference>
<dbReference type="GO" id="GO:0044209">
    <property type="term" value="P:AMP salvage"/>
    <property type="evidence" value="ECO:0007669"/>
    <property type="project" value="UniProtKB-UniRule"/>
</dbReference>
<dbReference type="CDD" id="cd01428">
    <property type="entry name" value="ADK"/>
    <property type="match status" value="1"/>
</dbReference>
<dbReference type="Gene3D" id="3.40.50.300">
    <property type="entry name" value="P-loop containing nucleotide triphosphate hydrolases"/>
    <property type="match status" value="1"/>
</dbReference>
<dbReference type="HAMAP" id="MF_00235">
    <property type="entry name" value="Adenylate_kinase_Adk"/>
    <property type="match status" value="1"/>
</dbReference>
<dbReference type="InterPro" id="IPR006259">
    <property type="entry name" value="Adenyl_kin_sub"/>
</dbReference>
<dbReference type="InterPro" id="IPR000850">
    <property type="entry name" value="Adenylat/UMP-CMP_kin"/>
</dbReference>
<dbReference type="InterPro" id="IPR033690">
    <property type="entry name" value="Adenylat_kinase_CS"/>
</dbReference>
<dbReference type="InterPro" id="IPR007862">
    <property type="entry name" value="Adenylate_kinase_lid-dom"/>
</dbReference>
<dbReference type="InterPro" id="IPR027417">
    <property type="entry name" value="P-loop_NTPase"/>
</dbReference>
<dbReference type="NCBIfam" id="TIGR01351">
    <property type="entry name" value="adk"/>
    <property type="match status" value="1"/>
</dbReference>
<dbReference type="NCBIfam" id="NF001383">
    <property type="entry name" value="PRK00279.2-1"/>
    <property type="match status" value="1"/>
</dbReference>
<dbReference type="PANTHER" id="PTHR23359">
    <property type="entry name" value="NUCLEOTIDE KINASE"/>
    <property type="match status" value="1"/>
</dbReference>
<dbReference type="Pfam" id="PF00406">
    <property type="entry name" value="ADK"/>
    <property type="match status" value="1"/>
</dbReference>
<dbReference type="Pfam" id="PF05191">
    <property type="entry name" value="ADK_lid"/>
    <property type="match status" value="1"/>
</dbReference>
<dbReference type="PRINTS" id="PR00094">
    <property type="entry name" value="ADENYLTKNASE"/>
</dbReference>
<dbReference type="SUPFAM" id="SSF52540">
    <property type="entry name" value="P-loop containing nucleoside triphosphate hydrolases"/>
    <property type="match status" value="1"/>
</dbReference>
<dbReference type="PROSITE" id="PS00113">
    <property type="entry name" value="ADENYLATE_KINASE"/>
    <property type="match status" value="1"/>
</dbReference>
<reference key="1">
    <citation type="journal article" date="2001" name="Science">
        <title>Mechanisms of evolution in Rickettsia conorii and R. prowazekii.</title>
        <authorList>
            <person name="Ogata H."/>
            <person name="Audic S."/>
            <person name="Renesto-Audiffren P."/>
            <person name="Fournier P.-E."/>
            <person name="Barbe V."/>
            <person name="Samson D."/>
            <person name="Roux V."/>
            <person name="Cossart P."/>
            <person name="Weissenbach J."/>
            <person name="Claverie J.-M."/>
            <person name="Raoult D."/>
        </authorList>
    </citation>
    <scope>NUCLEOTIDE SEQUENCE [LARGE SCALE GENOMIC DNA]</scope>
    <source>
        <strain>ATCC VR-613 / Malish 7</strain>
    </source>
</reference>
<name>KAD_RICCN</name>
<protein>
    <recommendedName>
        <fullName evidence="1">Adenylate kinase</fullName>
        <shortName evidence="1">AK</shortName>
        <ecNumber evidence="1">2.7.4.3</ecNumber>
    </recommendedName>
    <alternativeName>
        <fullName evidence="1">ATP-AMP transphosphorylase</fullName>
    </alternativeName>
    <alternativeName>
        <fullName evidence="1">ATP:AMP phosphotransferase</fullName>
    </alternativeName>
    <alternativeName>
        <fullName evidence="1">Adenylate monophosphate kinase</fullName>
    </alternativeName>
</protein>
<organism>
    <name type="scientific">Rickettsia conorii (strain ATCC VR-613 / Malish 7)</name>
    <dbReference type="NCBI Taxonomy" id="272944"/>
    <lineage>
        <taxon>Bacteria</taxon>
        <taxon>Pseudomonadati</taxon>
        <taxon>Pseudomonadota</taxon>
        <taxon>Alphaproteobacteria</taxon>
        <taxon>Rickettsiales</taxon>
        <taxon>Rickettsiaceae</taxon>
        <taxon>Rickettsieae</taxon>
        <taxon>Rickettsia</taxon>
        <taxon>spotted fever group</taxon>
    </lineage>
</organism>
<feature type="chain" id="PRO_0000158838" description="Adenylate kinase">
    <location>
        <begin position="1"/>
        <end position="212"/>
    </location>
</feature>
<feature type="region of interest" description="NMP" evidence="1">
    <location>
        <begin position="30"/>
        <end position="59"/>
    </location>
</feature>
<feature type="region of interest" description="LID" evidence="1">
    <location>
        <begin position="122"/>
        <end position="160"/>
    </location>
</feature>
<feature type="binding site" evidence="1">
    <location>
        <begin position="10"/>
        <end position="15"/>
    </location>
    <ligand>
        <name>ATP</name>
        <dbReference type="ChEBI" id="CHEBI:30616"/>
    </ligand>
</feature>
<feature type="binding site" evidence="1">
    <location>
        <position position="36"/>
    </location>
    <ligand>
        <name>AMP</name>
        <dbReference type="ChEBI" id="CHEBI:456215"/>
    </ligand>
</feature>
<feature type="binding site" evidence="1">
    <location>
        <begin position="57"/>
        <end position="59"/>
    </location>
    <ligand>
        <name>AMP</name>
        <dbReference type="ChEBI" id="CHEBI:456215"/>
    </ligand>
</feature>
<feature type="binding site" evidence="1">
    <location>
        <begin position="85"/>
        <end position="88"/>
    </location>
    <ligand>
        <name>AMP</name>
        <dbReference type="ChEBI" id="CHEBI:456215"/>
    </ligand>
</feature>
<feature type="binding site" evidence="1">
    <location>
        <position position="92"/>
    </location>
    <ligand>
        <name>AMP</name>
        <dbReference type="ChEBI" id="CHEBI:456215"/>
    </ligand>
</feature>
<feature type="binding site" evidence="1">
    <location>
        <position position="123"/>
    </location>
    <ligand>
        <name>ATP</name>
        <dbReference type="ChEBI" id="CHEBI:30616"/>
    </ligand>
</feature>
<feature type="binding site" evidence="1">
    <location>
        <position position="126"/>
    </location>
    <ligand>
        <name>Zn(2+)</name>
        <dbReference type="ChEBI" id="CHEBI:29105"/>
        <note>structural</note>
    </ligand>
</feature>
<feature type="binding site" evidence="1">
    <location>
        <position position="129"/>
    </location>
    <ligand>
        <name>Zn(2+)</name>
        <dbReference type="ChEBI" id="CHEBI:29105"/>
        <note>structural</note>
    </ligand>
</feature>
<feature type="binding site" evidence="1">
    <location>
        <begin position="132"/>
        <end position="133"/>
    </location>
    <ligand>
        <name>ATP</name>
        <dbReference type="ChEBI" id="CHEBI:30616"/>
    </ligand>
</feature>
<feature type="binding site" evidence="1">
    <location>
        <position position="146"/>
    </location>
    <ligand>
        <name>Zn(2+)</name>
        <dbReference type="ChEBI" id="CHEBI:29105"/>
        <note>structural</note>
    </ligand>
</feature>
<feature type="binding site" evidence="1">
    <location>
        <position position="149"/>
    </location>
    <ligand>
        <name>Zn(2+)</name>
        <dbReference type="ChEBI" id="CHEBI:29105"/>
        <note>structural</note>
    </ligand>
</feature>
<feature type="binding site" evidence="1">
    <location>
        <position position="157"/>
    </location>
    <ligand>
        <name>AMP</name>
        <dbReference type="ChEBI" id="CHEBI:456215"/>
    </ligand>
</feature>
<feature type="binding site" evidence="1">
    <location>
        <position position="168"/>
    </location>
    <ligand>
        <name>AMP</name>
        <dbReference type="ChEBI" id="CHEBI:456215"/>
    </ligand>
</feature>
<feature type="binding site" evidence="1">
    <location>
        <position position="196"/>
    </location>
    <ligand>
        <name>ATP</name>
        <dbReference type="ChEBI" id="CHEBI:30616"/>
    </ligand>
</feature>
<sequence>MMVIFLGPPGAGKGTQGKKIAKKIDLPHIAIGDIFRTIIKTSTSEAELINNYVKQGELIPNEIVNQVIKNFLLSSEYKNGYILDGYPRNLEQAKFFESFIKEKIKIIYFDVSDELLIKRILGRYSCKNCGKIYNRYFVQPKTDNVCDVCGSSTFDYRKDDNEEVIKKRIEVYKTETYPLIDYYKNSGNFYIVNGSKNEQEIEIDIQKILKIN</sequence>
<gene>
    <name evidence="1" type="primary">adk</name>
    <name type="ordered locus">RC0985</name>
</gene>
<evidence type="ECO:0000255" key="1">
    <source>
        <dbReference type="HAMAP-Rule" id="MF_00235"/>
    </source>
</evidence>
<keyword id="KW-0067">ATP-binding</keyword>
<keyword id="KW-0963">Cytoplasm</keyword>
<keyword id="KW-0418">Kinase</keyword>
<keyword id="KW-0479">Metal-binding</keyword>
<keyword id="KW-0545">Nucleotide biosynthesis</keyword>
<keyword id="KW-0547">Nucleotide-binding</keyword>
<keyword id="KW-0808">Transferase</keyword>
<keyword id="KW-0862">Zinc</keyword>
<proteinExistence type="inferred from homology"/>